<feature type="chain" id="PRO_0000318195" description="cAMP-responsive element-binding protein-like 2">
    <location>
        <begin position="1"/>
        <end position="119"/>
    </location>
</feature>
<feature type="domain" description="bZIP">
    <location>
        <begin position="23"/>
        <end position="86"/>
    </location>
</feature>
<feature type="region of interest" description="Disordered" evidence="2">
    <location>
        <begin position="1"/>
        <end position="23"/>
    </location>
</feature>
<feature type="region of interest" description="Basic motif" evidence="1">
    <location>
        <begin position="29"/>
        <end position="60"/>
    </location>
</feature>
<feature type="region of interest" description="Leucine-zipper" evidence="1">
    <location>
        <begin position="62"/>
        <end position="69"/>
    </location>
</feature>
<feature type="region of interest" description="Disordered" evidence="2">
    <location>
        <begin position="95"/>
        <end position="119"/>
    </location>
</feature>
<feature type="compositionally biased region" description="Basic residues" evidence="2">
    <location>
        <begin position="10"/>
        <end position="21"/>
    </location>
</feature>
<feature type="compositionally biased region" description="Low complexity" evidence="2">
    <location>
        <begin position="102"/>
        <end position="119"/>
    </location>
</feature>
<feature type="splice variant" id="VSP_031181" description="In isoform 2." evidence="3">
    <location>
        <begin position="1"/>
        <end position="70"/>
    </location>
</feature>
<evidence type="ECO:0000250" key="1"/>
<evidence type="ECO:0000256" key="2">
    <source>
        <dbReference type="SAM" id="MobiDB-lite"/>
    </source>
</evidence>
<evidence type="ECO:0000303" key="3">
    <source ref="1"/>
</evidence>
<evidence type="ECO:0000305" key="4"/>
<comment type="function">
    <text evidence="1">Probable regulator of creb1 transcriptional activity which is involved in adipose cells differentiation. May also play a regulatory role in the cell cycle (By similarity).</text>
</comment>
<comment type="subcellular location">
    <subcellularLocation>
        <location evidence="1">Nucleus</location>
    </subcellularLocation>
</comment>
<comment type="alternative products">
    <event type="alternative splicing"/>
    <isoform>
        <id>Q642H2-1</id>
        <name>1</name>
        <sequence type="displayed"/>
    </isoform>
    <isoform>
        <id>Q642H2-2</id>
        <name>2</name>
        <sequence type="described" ref="VSP_031181"/>
    </isoform>
</comment>
<comment type="similarity">
    <text evidence="4">Belongs to the bZIP family. ATF subfamily.</text>
</comment>
<reference key="1">
    <citation type="submission" date="2004-09" db="EMBL/GenBank/DDBJ databases">
        <authorList>
            <consortium name="NIH - Zebrafish Gene Collection (ZGC) project"/>
        </authorList>
    </citation>
    <scope>NUCLEOTIDE SEQUENCE [LARGE SCALE MRNA] (ISOFORMS 1 AND 2)</scope>
    <source>
        <tissue>Brain</tissue>
    </source>
</reference>
<accession>Q642H2</accession>
<accession>Q6DH72</accession>
<sequence>MDDSKIVAGKVKKPGKRGRKPAKIDLKAKLERSRQSARECRARKKLRYQYLEELVSSKERAICALREELDMYKQWCLAMDQGKIPSEIKALLTGDEQKTPQSCSNKTTKNSKYSSSSGI</sequence>
<proteinExistence type="inferred from homology"/>
<dbReference type="EMBL" id="BC076109">
    <property type="protein sequence ID" value="AAH76109.1"/>
    <property type="molecule type" value="mRNA"/>
</dbReference>
<dbReference type="EMBL" id="BC081675">
    <property type="protein sequence ID" value="AAH81675.1"/>
    <property type="molecule type" value="mRNA"/>
</dbReference>
<dbReference type="RefSeq" id="NP_001002702.2">
    <molecule id="Q642H2-1"/>
    <property type="nucleotide sequence ID" value="NM_001002702.2"/>
</dbReference>
<dbReference type="RefSeq" id="XP_005168555.1">
    <molecule id="Q642H2-1"/>
    <property type="nucleotide sequence ID" value="XM_005168498.5"/>
</dbReference>
<dbReference type="SMR" id="Q642H2"/>
<dbReference type="FunCoup" id="Q642H2">
    <property type="interactions" value="963"/>
</dbReference>
<dbReference type="STRING" id="7955.ENSDARP00000137889"/>
<dbReference type="PaxDb" id="7955-ENSDARP00000113878"/>
<dbReference type="Ensembl" id="ENSDART00000172255">
    <molecule id="Q642H2-1"/>
    <property type="protein sequence ID" value="ENSDARP00000137889"/>
    <property type="gene ID" value="ENSDARG00000104049"/>
</dbReference>
<dbReference type="GeneID" id="436975"/>
<dbReference type="KEGG" id="dre:436975"/>
<dbReference type="AGR" id="ZFIN:ZDB-GENE-040718-456"/>
<dbReference type="CTD" id="1389"/>
<dbReference type="ZFIN" id="ZDB-GENE-040718-456">
    <property type="gene designation" value="crebl2"/>
</dbReference>
<dbReference type="eggNOG" id="KOG4515">
    <property type="taxonomic scope" value="Eukaryota"/>
</dbReference>
<dbReference type="HOGENOM" id="CLU_134161_0_0_1"/>
<dbReference type="InParanoid" id="Q642H2"/>
<dbReference type="OMA" id="DKYYKWN"/>
<dbReference type="OrthoDB" id="5984119at2759"/>
<dbReference type="PhylomeDB" id="Q642H2"/>
<dbReference type="PRO" id="PR:Q642H2"/>
<dbReference type="Proteomes" id="UP000000437">
    <property type="component" value="Chromosome 4"/>
</dbReference>
<dbReference type="Bgee" id="ENSDARG00000104049">
    <property type="expression patterns" value="Expressed in brain and 22 other cell types or tissues"/>
</dbReference>
<dbReference type="GO" id="GO:0005634">
    <property type="term" value="C:nucleus"/>
    <property type="evidence" value="ECO:0000250"/>
    <property type="project" value="UniProtKB"/>
</dbReference>
<dbReference type="GO" id="GO:0003677">
    <property type="term" value="F:DNA binding"/>
    <property type="evidence" value="ECO:0007669"/>
    <property type="project" value="UniProtKB-KW"/>
</dbReference>
<dbReference type="GO" id="GO:0003700">
    <property type="term" value="F:DNA-binding transcription factor activity"/>
    <property type="evidence" value="ECO:0007669"/>
    <property type="project" value="InterPro"/>
</dbReference>
<dbReference type="GO" id="GO:0030154">
    <property type="term" value="P:cell differentiation"/>
    <property type="evidence" value="ECO:0007669"/>
    <property type="project" value="UniProtKB-KW"/>
</dbReference>
<dbReference type="GO" id="GO:0046326">
    <property type="term" value="P:positive regulation of D-glucose import"/>
    <property type="evidence" value="ECO:0000250"/>
    <property type="project" value="UniProtKB"/>
</dbReference>
<dbReference type="GO" id="GO:0045893">
    <property type="term" value="P:positive regulation of DNA-templated transcription"/>
    <property type="evidence" value="ECO:0000250"/>
    <property type="project" value="UniProtKB"/>
</dbReference>
<dbReference type="GO" id="GO:0045600">
    <property type="term" value="P:positive regulation of fat cell differentiation"/>
    <property type="evidence" value="ECO:0000250"/>
    <property type="project" value="UniProtKB"/>
</dbReference>
<dbReference type="GO" id="GO:0046889">
    <property type="term" value="P:positive regulation of lipid biosynthetic process"/>
    <property type="evidence" value="ECO:0000250"/>
    <property type="project" value="UniProtKB"/>
</dbReference>
<dbReference type="GO" id="GO:0006355">
    <property type="term" value="P:regulation of DNA-templated transcription"/>
    <property type="evidence" value="ECO:0000318"/>
    <property type="project" value="GO_Central"/>
</dbReference>
<dbReference type="CDD" id="cd14709">
    <property type="entry name" value="bZIP_CREBL2"/>
    <property type="match status" value="1"/>
</dbReference>
<dbReference type="FunFam" id="1.20.5.170:FF:000044">
    <property type="entry name" value="cAMP-responsive element-binding protein-like 2 isoform X2"/>
    <property type="match status" value="1"/>
</dbReference>
<dbReference type="Gene3D" id="1.20.5.170">
    <property type="match status" value="1"/>
</dbReference>
<dbReference type="InterPro" id="IPR004827">
    <property type="entry name" value="bZIP"/>
</dbReference>
<dbReference type="InterPro" id="IPR046347">
    <property type="entry name" value="bZIP_sf"/>
</dbReference>
<dbReference type="InterPro" id="IPR039250">
    <property type="entry name" value="CREBL2/REPTOR-BP"/>
</dbReference>
<dbReference type="PANTHER" id="PTHR21051">
    <property type="entry name" value="CAMP-RESPONSIVE ELEMENT-BINDING PROTEIN-LIKE 2"/>
    <property type="match status" value="1"/>
</dbReference>
<dbReference type="PANTHER" id="PTHR21051:SF4">
    <property type="entry name" value="CAMP-RESPONSIVE ELEMENT-BINDING PROTEIN-LIKE 2"/>
    <property type="match status" value="1"/>
</dbReference>
<dbReference type="Pfam" id="PF07716">
    <property type="entry name" value="bZIP_2"/>
    <property type="match status" value="1"/>
</dbReference>
<dbReference type="SUPFAM" id="SSF57959">
    <property type="entry name" value="Leucine zipper domain"/>
    <property type="match status" value="1"/>
</dbReference>
<organism>
    <name type="scientific">Danio rerio</name>
    <name type="common">Zebrafish</name>
    <name type="synonym">Brachydanio rerio</name>
    <dbReference type="NCBI Taxonomy" id="7955"/>
    <lineage>
        <taxon>Eukaryota</taxon>
        <taxon>Metazoa</taxon>
        <taxon>Chordata</taxon>
        <taxon>Craniata</taxon>
        <taxon>Vertebrata</taxon>
        <taxon>Euteleostomi</taxon>
        <taxon>Actinopterygii</taxon>
        <taxon>Neopterygii</taxon>
        <taxon>Teleostei</taxon>
        <taxon>Ostariophysi</taxon>
        <taxon>Cypriniformes</taxon>
        <taxon>Danionidae</taxon>
        <taxon>Danioninae</taxon>
        <taxon>Danio</taxon>
    </lineage>
</organism>
<protein>
    <recommendedName>
        <fullName>cAMP-responsive element-binding protein-like 2</fullName>
    </recommendedName>
</protein>
<gene>
    <name type="primary">crebl2</name>
    <name type="ORF">zgc:92620</name>
</gene>
<keyword id="KW-0010">Activator</keyword>
<keyword id="KW-0025">Alternative splicing</keyword>
<keyword id="KW-0221">Differentiation</keyword>
<keyword id="KW-0238">DNA-binding</keyword>
<keyword id="KW-0539">Nucleus</keyword>
<keyword id="KW-1185">Reference proteome</keyword>
<keyword id="KW-0804">Transcription</keyword>
<keyword id="KW-0805">Transcription regulation</keyword>
<name>CRBL2_DANRE</name>